<evidence type="ECO:0000255" key="1">
    <source>
        <dbReference type="HAMAP-Rule" id="MF_00151"/>
    </source>
</evidence>
<proteinExistence type="inferred from homology"/>
<feature type="chain" id="PRO_1000058167" description="Phosphopantetheine adenylyltransferase">
    <location>
        <begin position="1"/>
        <end position="164"/>
    </location>
</feature>
<feature type="binding site" evidence="1">
    <location>
        <begin position="10"/>
        <end position="11"/>
    </location>
    <ligand>
        <name>ATP</name>
        <dbReference type="ChEBI" id="CHEBI:30616"/>
    </ligand>
</feature>
<feature type="binding site" evidence="1">
    <location>
        <position position="10"/>
    </location>
    <ligand>
        <name>substrate</name>
    </ligand>
</feature>
<feature type="binding site" evidence="1">
    <location>
        <position position="18"/>
    </location>
    <ligand>
        <name>ATP</name>
        <dbReference type="ChEBI" id="CHEBI:30616"/>
    </ligand>
</feature>
<feature type="binding site" evidence="1">
    <location>
        <position position="42"/>
    </location>
    <ligand>
        <name>substrate</name>
    </ligand>
</feature>
<feature type="binding site" evidence="1">
    <location>
        <position position="79"/>
    </location>
    <ligand>
        <name>substrate</name>
    </ligand>
</feature>
<feature type="binding site" evidence="1">
    <location>
        <position position="93"/>
    </location>
    <ligand>
        <name>substrate</name>
    </ligand>
</feature>
<feature type="binding site" evidence="1">
    <location>
        <begin position="94"/>
        <end position="96"/>
    </location>
    <ligand>
        <name>ATP</name>
        <dbReference type="ChEBI" id="CHEBI:30616"/>
    </ligand>
</feature>
<feature type="binding site" evidence="1">
    <location>
        <position position="104"/>
    </location>
    <ligand>
        <name>ATP</name>
        <dbReference type="ChEBI" id="CHEBI:30616"/>
    </ligand>
</feature>
<feature type="binding site" evidence="1">
    <location>
        <begin position="129"/>
        <end position="135"/>
    </location>
    <ligand>
        <name>ATP</name>
        <dbReference type="ChEBI" id="CHEBI:30616"/>
    </ligand>
</feature>
<feature type="site" description="Transition state stabilizer" evidence="1">
    <location>
        <position position="18"/>
    </location>
</feature>
<sequence length="164" mass="18883">MKKVAVYPGTFDPITFGHIDVINKALKLFDKVIIAASDGANKNYLFNSLERVQLIKKALFVDLKFDKKKIEVISFTSLTTDLCKKYKSNIILRGLRAVSDFEYEFQLAGMNRKLNNNIETIFLMSDVENQIISSRFVKEIVRLKGDIKKFTTKSTIKSLKEKYE</sequence>
<accession>Q4FLZ4</accession>
<comment type="function">
    <text evidence="1">Reversibly transfers an adenylyl group from ATP to 4'-phosphopantetheine, yielding dephospho-CoA (dPCoA) and pyrophosphate.</text>
</comment>
<comment type="catalytic activity">
    <reaction evidence="1">
        <text>(R)-4'-phosphopantetheine + ATP + H(+) = 3'-dephospho-CoA + diphosphate</text>
        <dbReference type="Rhea" id="RHEA:19801"/>
        <dbReference type="ChEBI" id="CHEBI:15378"/>
        <dbReference type="ChEBI" id="CHEBI:30616"/>
        <dbReference type="ChEBI" id="CHEBI:33019"/>
        <dbReference type="ChEBI" id="CHEBI:57328"/>
        <dbReference type="ChEBI" id="CHEBI:61723"/>
        <dbReference type="EC" id="2.7.7.3"/>
    </reaction>
</comment>
<comment type="cofactor">
    <cofactor evidence="1">
        <name>Mg(2+)</name>
        <dbReference type="ChEBI" id="CHEBI:18420"/>
    </cofactor>
</comment>
<comment type="pathway">
    <text evidence="1">Cofactor biosynthesis; coenzyme A biosynthesis; CoA from (R)-pantothenate: step 4/5.</text>
</comment>
<comment type="subunit">
    <text evidence="1">Homohexamer.</text>
</comment>
<comment type="subcellular location">
    <subcellularLocation>
        <location evidence="1">Cytoplasm</location>
    </subcellularLocation>
</comment>
<comment type="similarity">
    <text evidence="1">Belongs to the bacterial CoaD family.</text>
</comment>
<keyword id="KW-0067">ATP-binding</keyword>
<keyword id="KW-0173">Coenzyme A biosynthesis</keyword>
<keyword id="KW-0963">Cytoplasm</keyword>
<keyword id="KW-0460">Magnesium</keyword>
<keyword id="KW-0547">Nucleotide-binding</keyword>
<keyword id="KW-0548">Nucleotidyltransferase</keyword>
<keyword id="KW-1185">Reference proteome</keyword>
<keyword id="KW-0808">Transferase</keyword>
<dbReference type="EC" id="2.7.7.3" evidence="1"/>
<dbReference type="EMBL" id="CP000084">
    <property type="protein sequence ID" value="AAZ21794.1"/>
    <property type="molecule type" value="Genomic_DNA"/>
</dbReference>
<dbReference type="RefSeq" id="WP_011282085.1">
    <property type="nucleotide sequence ID" value="NC_007205.1"/>
</dbReference>
<dbReference type="SMR" id="Q4FLZ4"/>
<dbReference type="STRING" id="335992.SAR11_0986"/>
<dbReference type="GeneID" id="66295476"/>
<dbReference type="KEGG" id="pub:SAR11_0986"/>
<dbReference type="eggNOG" id="COG0669">
    <property type="taxonomic scope" value="Bacteria"/>
</dbReference>
<dbReference type="HOGENOM" id="CLU_100149_0_1_5"/>
<dbReference type="OrthoDB" id="9806661at2"/>
<dbReference type="UniPathway" id="UPA00241">
    <property type="reaction ID" value="UER00355"/>
</dbReference>
<dbReference type="Proteomes" id="UP000002528">
    <property type="component" value="Chromosome"/>
</dbReference>
<dbReference type="GO" id="GO:0005737">
    <property type="term" value="C:cytoplasm"/>
    <property type="evidence" value="ECO:0007669"/>
    <property type="project" value="UniProtKB-SubCell"/>
</dbReference>
<dbReference type="GO" id="GO:0005524">
    <property type="term" value="F:ATP binding"/>
    <property type="evidence" value="ECO:0007669"/>
    <property type="project" value="UniProtKB-KW"/>
</dbReference>
<dbReference type="GO" id="GO:0004595">
    <property type="term" value="F:pantetheine-phosphate adenylyltransferase activity"/>
    <property type="evidence" value="ECO:0007669"/>
    <property type="project" value="UniProtKB-UniRule"/>
</dbReference>
<dbReference type="GO" id="GO:0015937">
    <property type="term" value="P:coenzyme A biosynthetic process"/>
    <property type="evidence" value="ECO:0007669"/>
    <property type="project" value="UniProtKB-UniRule"/>
</dbReference>
<dbReference type="CDD" id="cd02163">
    <property type="entry name" value="PPAT"/>
    <property type="match status" value="1"/>
</dbReference>
<dbReference type="Gene3D" id="3.40.50.620">
    <property type="entry name" value="HUPs"/>
    <property type="match status" value="1"/>
</dbReference>
<dbReference type="HAMAP" id="MF_00151">
    <property type="entry name" value="PPAT_bact"/>
    <property type="match status" value="1"/>
</dbReference>
<dbReference type="InterPro" id="IPR004821">
    <property type="entry name" value="Cyt_trans-like"/>
</dbReference>
<dbReference type="InterPro" id="IPR001980">
    <property type="entry name" value="PPAT"/>
</dbReference>
<dbReference type="InterPro" id="IPR014729">
    <property type="entry name" value="Rossmann-like_a/b/a_fold"/>
</dbReference>
<dbReference type="NCBIfam" id="TIGR01510">
    <property type="entry name" value="coaD_prev_kdtB"/>
    <property type="match status" value="1"/>
</dbReference>
<dbReference type="NCBIfam" id="TIGR00125">
    <property type="entry name" value="cyt_tran_rel"/>
    <property type="match status" value="1"/>
</dbReference>
<dbReference type="PANTHER" id="PTHR21342">
    <property type="entry name" value="PHOSPHOPANTETHEINE ADENYLYLTRANSFERASE"/>
    <property type="match status" value="1"/>
</dbReference>
<dbReference type="PANTHER" id="PTHR21342:SF1">
    <property type="entry name" value="PHOSPHOPANTETHEINE ADENYLYLTRANSFERASE"/>
    <property type="match status" value="1"/>
</dbReference>
<dbReference type="Pfam" id="PF01467">
    <property type="entry name" value="CTP_transf_like"/>
    <property type="match status" value="1"/>
</dbReference>
<dbReference type="PRINTS" id="PR01020">
    <property type="entry name" value="LPSBIOSNTHSS"/>
</dbReference>
<dbReference type="SUPFAM" id="SSF52374">
    <property type="entry name" value="Nucleotidylyl transferase"/>
    <property type="match status" value="1"/>
</dbReference>
<protein>
    <recommendedName>
        <fullName evidence="1">Phosphopantetheine adenylyltransferase</fullName>
        <ecNumber evidence="1">2.7.7.3</ecNumber>
    </recommendedName>
    <alternativeName>
        <fullName evidence="1">Dephospho-CoA pyrophosphorylase</fullName>
    </alternativeName>
    <alternativeName>
        <fullName evidence="1">Pantetheine-phosphate adenylyltransferase</fullName>
        <shortName evidence="1">PPAT</shortName>
    </alternativeName>
</protein>
<reference key="1">
    <citation type="journal article" date="2005" name="Science">
        <title>Genome streamlining in a cosmopolitan oceanic bacterium.</title>
        <authorList>
            <person name="Giovannoni S.J."/>
            <person name="Tripp H.J."/>
            <person name="Givan S."/>
            <person name="Podar M."/>
            <person name="Vergin K.L."/>
            <person name="Baptista D."/>
            <person name="Bibbs L."/>
            <person name="Eads J."/>
            <person name="Richardson T.H."/>
            <person name="Noordewier M."/>
            <person name="Rappe M.S."/>
            <person name="Short J.M."/>
            <person name="Carrington J.C."/>
            <person name="Mathur E.J."/>
        </authorList>
    </citation>
    <scope>NUCLEOTIDE SEQUENCE [LARGE SCALE GENOMIC DNA]</scope>
    <source>
        <strain>HTCC1062</strain>
    </source>
</reference>
<organism>
    <name type="scientific">Pelagibacter ubique (strain HTCC1062)</name>
    <dbReference type="NCBI Taxonomy" id="335992"/>
    <lineage>
        <taxon>Bacteria</taxon>
        <taxon>Pseudomonadati</taxon>
        <taxon>Pseudomonadota</taxon>
        <taxon>Alphaproteobacteria</taxon>
        <taxon>Candidatus Pelagibacterales</taxon>
        <taxon>Candidatus Pelagibacteraceae</taxon>
        <taxon>Candidatus Pelagibacter</taxon>
    </lineage>
</organism>
<gene>
    <name evidence="1" type="primary">coaD</name>
    <name type="ordered locus">SAR11_0986</name>
</gene>
<name>COAD_PELUB</name>